<protein>
    <recommendedName>
        <fullName>Glutamate decarboxylase 5</fullName>
        <shortName>GAD 5</shortName>
        <ecNumber>4.1.1.15</ecNumber>
    </recommendedName>
</protein>
<organism>
    <name type="scientific">Arabidopsis thaliana</name>
    <name type="common">Mouse-ear cress</name>
    <dbReference type="NCBI Taxonomy" id="3702"/>
    <lineage>
        <taxon>Eukaryota</taxon>
        <taxon>Viridiplantae</taxon>
        <taxon>Streptophyta</taxon>
        <taxon>Embryophyta</taxon>
        <taxon>Tracheophyta</taxon>
        <taxon>Spermatophyta</taxon>
        <taxon>Magnoliopsida</taxon>
        <taxon>eudicotyledons</taxon>
        <taxon>Gunneridae</taxon>
        <taxon>Pentapetalae</taxon>
        <taxon>rosids</taxon>
        <taxon>malvids</taxon>
        <taxon>Brassicales</taxon>
        <taxon>Brassicaceae</taxon>
        <taxon>Camelineae</taxon>
        <taxon>Arabidopsis</taxon>
    </lineage>
</organism>
<dbReference type="EC" id="4.1.1.15"/>
<dbReference type="EMBL" id="AB026646">
    <property type="protein sequence ID" value="BAB02870.1"/>
    <property type="molecule type" value="Genomic_DNA"/>
</dbReference>
<dbReference type="EMBL" id="CP002686">
    <property type="protein sequence ID" value="AEE76003.1"/>
    <property type="molecule type" value="Genomic_DNA"/>
</dbReference>
<dbReference type="EMBL" id="CP002686">
    <property type="protein sequence ID" value="AEE76004.1"/>
    <property type="molecule type" value="Genomic_DNA"/>
</dbReference>
<dbReference type="RefSeq" id="NP_001154621.1">
    <property type="nucleotide sequence ID" value="NM_001161149.1"/>
</dbReference>
<dbReference type="RefSeq" id="NP_188403.1">
    <property type="nucleotide sequence ID" value="NM_112657.2"/>
</dbReference>
<dbReference type="SMR" id="Q9LSH2"/>
<dbReference type="FunCoup" id="Q9LSH2">
    <property type="interactions" value="329"/>
</dbReference>
<dbReference type="IntAct" id="Q9LSH2">
    <property type="interactions" value="1"/>
</dbReference>
<dbReference type="STRING" id="3702.Q9LSH2"/>
<dbReference type="iPTMnet" id="Q9LSH2"/>
<dbReference type="PaxDb" id="3702-AT3G17760.2"/>
<dbReference type="ProteomicsDB" id="222745"/>
<dbReference type="EnsemblPlants" id="AT3G17760.1">
    <property type="protein sequence ID" value="AT3G17760.1"/>
    <property type="gene ID" value="AT3G17760"/>
</dbReference>
<dbReference type="EnsemblPlants" id="AT3G17760.2">
    <property type="protein sequence ID" value="AT3G17760.2"/>
    <property type="gene ID" value="AT3G17760"/>
</dbReference>
<dbReference type="GeneID" id="821044"/>
<dbReference type="Gramene" id="AT3G17760.1">
    <property type="protein sequence ID" value="AT3G17760.1"/>
    <property type="gene ID" value="AT3G17760"/>
</dbReference>
<dbReference type="Gramene" id="AT3G17760.2">
    <property type="protein sequence ID" value="AT3G17760.2"/>
    <property type="gene ID" value="AT3G17760"/>
</dbReference>
<dbReference type="KEGG" id="ath:AT3G17760"/>
<dbReference type="Araport" id="AT3G17760"/>
<dbReference type="TAIR" id="AT3G17760">
    <property type="gene designation" value="GAD5"/>
</dbReference>
<dbReference type="eggNOG" id="KOG1383">
    <property type="taxonomic scope" value="Eukaryota"/>
</dbReference>
<dbReference type="HOGENOM" id="CLU_019582_2_2_1"/>
<dbReference type="InParanoid" id="Q9LSH2"/>
<dbReference type="OMA" id="VVPRFKM"/>
<dbReference type="OrthoDB" id="5152799at2759"/>
<dbReference type="PhylomeDB" id="Q9LSH2"/>
<dbReference type="BioCyc" id="ARA:AT3G17760-MONOMER"/>
<dbReference type="PRO" id="PR:Q9LSH2"/>
<dbReference type="Proteomes" id="UP000006548">
    <property type="component" value="Chromosome 3"/>
</dbReference>
<dbReference type="ExpressionAtlas" id="Q9LSH2">
    <property type="expression patterns" value="baseline and differential"/>
</dbReference>
<dbReference type="GO" id="GO:0009506">
    <property type="term" value="C:plasmodesma"/>
    <property type="evidence" value="ECO:0007005"/>
    <property type="project" value="TAIR"/>
</dbReference>
<dbReference type="GO" id="GO:0005516">
    <property type="term" value="F:calmodulin binding"/>
    <property type="evidence" value="ECO:0007669"/>
    <property type="project" value="UniProtKB-KW"/>
</dbReference>
<dbReference type="GO" id="GO:0004351">
    <property type="term" value="F:glutamate decarboxylase activity"/>
    <property type="evidence" value="ECO:0007669"/>
    <property type="project" value="UniProtKB-EC"/>
</dbReference>
<dbReference type="GO" id="GO:0030170">
    <property type="term" value="F:pyridoxal phosphate binding"/>
    <property type="evidence" value="ECO:0007669"/>
    <property type="project" value="InterPro"/>
</dbReference>
<dbReference type="GO" id="GO:0006536">
    <property type="term" value="P:glutamate metabolic process"/>
    <property type="evidence" value="ECO:0007669"/>
    <property type="project" value="InterPro"/>
</dbReference>
<dbReference type="CDD" id="cd06450">
    <property type="entry name" value="DOPA_deC_like"/>
    <property type="match status" value="1"/>
</dbReference>
<dbReference type="FunFam" id="3.40.640.10:FF:000022">
    <property type="entry name" value="Glutamate decarboxylase"/>
    <property type="match status" value="1"/>
</dbReference>
<dbReference type="FunFam" id="3.90.1150.160:FF:000001">
    <property type="entry name" value="Glutamate decarboxylase"/>
    <property type="match status" value="1"/>
</dbReference>
<dbReference type="FunFam" id="4.10.280.50:FF:000002">
    <property type="entry name" value="Glutamate decarboxylase"/>
    <property type="match status" value="1"/>
</dbReference>
<dbReference type="Gene3D" id="3.90.1150.160">
    <property type="match status" value="1"/>
</dbReference>
<dbReference type="Gene3D" id="4.10.280.50">
    <property type="match status" value="1"/>
</dbReference>
<dbReference type="Gene3D" id="3.40.640.10">
    <property type="entry name" value="Type I PLP-dependent aspartate aminotransferase-like (Major domain)"/>
    <property type="match status" value="1"/>
</dbReference>
<dbReference type="InterPro" id="IPR010107">
    <property type="entry name" value="Glutamate_decarboxylase"/>
</dbReference>
<dbReference type="InterPro" id="IPR002129">
    <property type="entry name" value="PyrdxlP-dep_de-COase"/>
</dbReference>
<dbReference type="InterPro" id="IPR015424">
    <property type="entry name" value="PyrdxlP-dep_Trfase"/>
</dbReference>
<dbReference type="InterPro" id="IPR015421">
    <property type="entry name" value="PyrdxlP-dep_Trfase_major"/>
</dbReference>
<dbReference type="NCBIfam" id="TIGR01788">
    <property type="entry name" value="Glu-decarb-GAD"/>
    <property type="match status" value="1"/>
</dbReference>
<dbReference type="PANTHER" id="PTHR43321">
    <property type="entry name" value="GLUTAMATE DECARBOXYLASE"/>
    <property type="match status" value="1"/>
</dbReference>
<dbReference type="PANTHER" id="PTHR43321:SF22">
    <property type="entry name" value="GLUTAMATE DECARBOXYLASE 5"/>
    <property type="match status" value="1"/>
</dbReference>
<dbReference type="Pfam" id="PF00282">
    <property type="entry name" value="Pyridoxal_deC"/>
    <property type="match status" value="1"/>
</dbReference>
<dbReference type="SUPFAM" id="SSF53383">
    <property type="entry name" value="PLP-dependent transferases"/>
    <property type="match status" value="1"/>
</dbReference>
<name>DCE5_ARATH</name>
<sequence>MVLATNSDSDEHLHSTFASRYVRAVVPRFKMPDHCMPKDAAYQVINDELMLDGNPRLNLASFVTTWMEPECDKLIMDSVNKNYVDMDEYPVTTELQNRCVNMIANLFHAPVGEDEAAIGCGTVGSSEAIMLAGLAFKRKWQHRRKAQGLPIDKPNIVTGANVQVCWEKFARYFEVELKEVKLSEDYYVMDPAKAVEMVDENTICVAAILGSTLTGEFEDVKQLNDLLAEKNAETGWETPIHVDAASGGFIAPFLYPDLEWDFRLPWVKSINVSGHKYGLVYAGVGWVVWRTKDDLPEELVFHINYLGADQPTFTLNFSKGSSQIIAQYYQFIRLGFEGYKNIMENCMDNARRLREGIEMTGKFNIVSKDIGVPLVAFSLKDSSKHTVFEIAESLRKFGWIIPAYTMPADAQHIAVLRVVIREDFSRGLADRLITHIIQVLKEIEGLPSRIAHLAAAAAVSGDDEEVKVKTAKMSLEDITKYWKRLVEHKRNIVC</sequence>
<gene>
    <name type="primary">GAD5</name>
    <name type="ordered locus">At3g17760</name>
    <name type="ORF">MIG5.6</name>
</gene>
<comment type="function">
    <text evidence="1">Catalyzes the production of GABA. The calmodulin-binding is calcium-dependent and it is proposed that this may, directly or indirectly, form a calcium regulated control of GABA biosynthesis (By similarity).</text>
</comment>
<comment type="catalytic activity">
    <reaction>
        <text>L-glutamate + H(+) = 4-aminobutanoate + CO2</text>
        <dbReference type="Rhea" id="RHEA:17785"/>
        <dbReference type="ChEBI" id="CHEBI:15378"/>
        <dbReference type="ChEBI" id="CHEBI:16526"/>
        <dbReference type="ChEBI" id="CHEBI:29985"/>
        <dbReference type="ChEBI" id="CHEBI:59888"/>
        <dbReference type="EC" id="4.1.1.15"/>
    </reaction>
</comment>
<comment type="cofactor">
    <cofactor evidence="1">
        <name>pyridoxal 5'-phosphate</name>
        <dbReference type="ChEBI" id="CHEBI:597326"/>
    </cofactor>
</comment>
<comment type="subunit">
    <text evidence="1">Homohexamer. Interacts with calmodulin (By similarity).</text>
</comment>
<comment type="tissue specificity">
    <text evidence="2">Expressed in flowers.</text>
</comment>
<comment type="similarity">
    <text evidence="3">Belongs to the group II decarboxylase family.</text>
</comment>
<accession>Q9LSH2</accession>
<proteinExistence type="evidence at transcript level"/>
<reference key="1">
    <citation type="journal article" date="2000" name="DNA Res.">
        <title>Structural analysis of Arabidopsis thaliana chromosome 3. I. Sequence features of the regions of 4,504,864 bp covered by sixty P1 and TAC clones.</title>
        <authorList>
            <person name="Sato S."/>
            <person name="Nakamura Y."/>
            <person name="Kaneko T."/>
            <person name="Katoh T."/>
            <person name="Asamizu E."/>
            <person name="Tabata S."/>
        </authorList>
    </citation>
    <scope>NUCLEOTIDE SEQUENCE [LARGE SCALE GENOMIC DNA]</scope>
    <source>
        <strain>cv. Columbia</strain>
    </source>
</reference>
<reference key="2">
    <citation type="journal article" date="2017" name="Plant J.">
        <title>Araport11: a complete reannotation of the Arabidopsis thaliana reference genome.</title>
        <authorList>
            <person name="Cheng C.Y."/>
            <person name="Krishnakumar V."/>
            <person name="Chan A.P."/>
            <person name="Thibaud-Nissen F."/>
            <person name="Schobel S."/>
            <person name="Town C.D."/>
        </authorList>
    </citation>
    <scope>GENOME REANNOTATION</scope>
    <source>
        <strain>cv. Columbia</strain>
    </source>
</reference>
<reference key="3">
    <citation type="journal article" date="1999" name="Trends Plant Sci.">
        <title>Metabolism and functions of gamma-aminobutyric acid.</title>
        <authorList>
            <person name="Shelp B.J."/>
            <person name="Bown A.W."/>
            <person name="McLean M.D."/>
        </authorList>
    </citation>
    <scope>IDENTIFICATION</scope>
</reference>
<reference key="4">
    <citation type="journal article" date="2008" name="Plant Cell Physiol.">
        <title>Contribution of the GABA shunt to hypoxia-induced alanine accumulation in roots of Arabidopsis thaliana.</title>
        <authorList>
            <person name="Miyashita Y."/>
            <person name="Good A.G."/>
        </authorList>
    </citation>
    <scope>TISSUE SPECIFICITY</scope>
</reference>
<keyword id="KW-0112">Calmodulin-binding</keyword>
<keyword id="KW-0210">Decarboxylase</keyword>
<keyword id="KW-0456">Lyase</keyword>
<keyword id="KW-0663">Pyridoxal phosphate</keyword>
<keyword id="KW-1185">Reference proteome</keyword>
<evidence type="ECO:0000250" key="1"/>
<evidence type="ECO:0000269" key="2">
    <source>
    </source>
</evidence>
<evidence type="ECO:0000305" key="3"/>
<feature type="chain" id="PRO_0000416956" description="Glutamate decarboxylase 5">
    <location>
        <begin position="1"/>
        <end position="494"/>
    </location>
</feature>
<feature type="modified residue" description="N6-(pyridoxal phosphate)lysine" evidence="1">
    <location>
        <position position="276"/>
    </location>
</feature>